<accession>O16962</accession>
<accession>Q86PK7</accession>
<accession>Q9GTF7</accession>
<accession>Q9GTF8</accession>
<organism>
    <name type="scientific">Caenorhabditis elegans</name>
    <dbReference type="NCBI Taxonomy" id="6239"/>
    <lineage>
        <taxon>Eukaryota</taxon>
        <taxon>Metazoa</taxon>
        <taxon>Ecdysozoa</taxon>
        <taxon>Nematoda</taxon>
        <taxon>Chromadorea</taxon>
        <taxon>Rhabditida</taxon>
        <taxon>Rhabditina</taxon>
        <taxon>Rhabditomorpha</taxon>
        <taxon>Rhabditoidea</taxon>
        <taxon>Rhabditidae</taxon>
        <taxon>Peloderinae</taxon>
        <taxon>Caenorhabditis</taxon>
    </lineage>
</organism>
<sequence>MNSPSSSSSFCSSSSSPSSLVLYSPDTCQVCGQKSHGKHFGAVTCRACAAFFRRCGSANNFKPCRRNMNCEFLKNGWFNCKPCRLKKCQDVGMTIENFQFDRDSFSPKKAKIALENFHNQVPFSIATFTGRSNLIVISAPTEEECIPKCYIDVQFLIDKLSNVLKEGPEVPLHTPNALEKLALGLQIIRGRKRELKLITKLGKEETLGLWQDDMMKVAKWLTYFDDFQQLSHRMRSEMLKGMWKVWSRLETLALTAMGRRLMICQKDMIMTHTEKEQVMAHPKQIEVDISWCSRYTLEQLRFFADSDLDDRNEQVIQAMMELQPTDVELSYMMCQACLHYAGKRYQGEVLEIAERFQETLSNHLHDYYVNRMNMPQYSMRVANLMKINNHIQLDIYRGRVKYDLARVFDVFYLEFSHPEVFIDL</sequence>
<proteinExistence type="evidence at transcript level"/>
<protein>
    <recommendedName>
        <fullName>Nuclear hormone receptor family member nhr-55</fullName>
    </recommendedName>
</protein>
<reference key="1">
    <citation type="journal article" date="2005" name="J. Mol. Evol.">
        <title>Explosive lineage-specific expansion of the orphan nuclear receptor HNF4 in nematodes.</title>
        <authorList>
            <person name="Robinson-Rechavi M."/>
            <person name="Maina C.V."/>
            <person name="Gissendanner C.R."/>
            <person name="Laudet V."/>
            <person name="Sluder A."/>
        </authorList>
    </citation>
    <scope>NUCLEOTIDE SEQUENCE [MRNA]</scope>
</reference>
<reference key="2">
    <citation type="journal article" date="1998" name="Science">
        <title>Genome sequence of the nematode C. elegans: a platform for investigating biology.</title>
        <authorList>
            <consortium name="The C. elegans sequencing consortium"/>
        </authorList>
    </citation>
    <scope>NUCLEOTIDE SEQUENCE [LARGE SCALE GENOMIC DNA]</scope>
    <source>
        <strain>Bristol N2</strain>
    </source>
</reference>
<gene>
    <name type="primary">nhr-55</name>
    <name type="ORF">T01G6.7</name>
</gene>
<dbReference type="EMBL" id="AY204171">
    <property type="protein sequence ID" value="AAO39175.1"/>
    <property type="molecule type" value="mRNA"/>
</dbReference>
<dbReference type="EMBL" id="AF273801">
    <property type="protein sequence ID" value="AAG15150.1"/>
    <property type="molecule type" value="mRNA"/>
</dbReference>
<dbReference type="EMBL" id="AF273802">
    <property type="protein sequence ID" value="AAG15151.1"/>
    <property type="molecule type" value="mRNA"/>
</dbReference>
<dbReference type="EMBL" id="FO081653">
    <property type="protein sequence ID" value="CCD73122.1"/>
    <property type="molecule type" value="Genomic_DNA"/>
</dbReference>
<dbReference type="PIR" id="T32189">
    <property type="entry name" value="T32189"/>
</dbReference>
<dbReference type="RefSeq" id="NP_503215.2">
    <property type="nucleotide sequence ID" value="NM_070814.6"/>
</dbReference>
<dbReference type="FunCoup" id="O16962">
    <property type="interactions" value="227"/>
</dbReference>
<dbReference type="PaxDb" id="6239-T01G6.7"/>
<dbReference type="EnsemblMetazoa" id="T01G6.7.1">
    <property type="protein sequence ID" value="T01G6.7.1"/>
    <property type="gene ID" value="WBGene00003645"/>
</dbReference>
<dbReference type="GeneID" id="178570"/>
<dbReference type="KEGG" id="cel:CELE_T01G6.7"/>
<dbReference type="UCSC" id="T01G6.7">
    <property type="organism name" value="c. elegans"/>
</dbReference>
<dbReference type="AGR" id="WB:WBGene00003645"/>
<dbReference type="CTD" id="178570"/>
<dbReference type="WormBase" id="T01G6.7">
    <property type="protein sequence ID" value="CE37786"/>
    <property type="gene ID" value="WBGene00003645"/>
    <property type="gene designation" value="nhr-55"/>
</dbReference>
<dbReference type="eggNOG" id="KOG3575">
    <property type="taxonomic scope" value="Eukaryota"/>
</dbReference>
<dbReference type="GeneTree" id="ENSGT00940000164378"/>
<dbReference type="HOGENOM" id="CLU_007368_7_1_1"/>
<dbReference type="InParanoid" id="O16962"/>
<dbReference type="OMA" id="MPQYSMR"/>
<dbReference type="OrthoDB" id="5850793at2759"/>
<dbReference type="PhylomeDB" id="O16962"/>
<dbReference type="PRO" id="PR:O16962"/>
<dbReference type="Proteomes" id="UP000001940">
    <property type="component" value="Chromosome V"/>
</dbReference>
<dbReference type="Bgee" id="WBGene00003645">
    <property type="expression patterns" value="Expressed in material anatomical entity and 4 other cell types or tissues"/>
</dbReference>
<dbReference type="GO" id="GO:0005634">
    <property type="term" value="C:nucleus"/>
    <property type="evidence" value="ECO:0007669"/>
    <property type="project" value="UniProtKB-SubCell"/>
</dbReference>
<dbReference type="GO" id="GO:0003700">
    <property type="term" value="F:DNA-binding transcription factor activity"/>
    <property type="evidence" value="ECO:0007669"/>
    <property type="project" value="InterPro"/>
</dbReference>
<dbReference type="GO" id="GO:0000978">
    <property type="term" value="F:RNA polymerase II cis-regulatory region sequence-specific DNA binding"/>
    <property type="evidence" value="ECO:0007669"/>
    <property type="project" value="InterPro"/>
</dbReference>
<dbReference type="GO" id="GO:0008270">
    <property type="term" value="F:zinc ion binding"/>
    <property type="evidence" value="ECO:0007669"/>
    <property type="project" value="UniProtKB-KW"/>
</dbReference>
<dbReference type="CDD" id="cd06960">
    <property type="entry name" value="NR_DBD_HNF4A"/>
    <property type="match status" value="1"/>
</dbReference>
<dbReference type="Gene3D" id="3.30.50.10">
    <property type="entry name" value="Erythroid Transcription Factor GATA-1, subunit A"/>
    <property type="match status" value="1"/>
</dbReference>
<dbReference type="Gene3D" id="1.10.565.10">
    <property type="entry name" value="Retinoid X Receptor"/>
    <property type="match status" value="1"/>
</dbReference>
<dbReference type="InterPro" id="IPR051152">
    <property type="entry name" value="C.elegans_Orphan_NR"/>
</dbReference>
<dbReference type="InterPro" id="IPR049636">
    <property type="entry name" value="HNF4-like_DBD"/>
</dbReference>
<dbReference type="InterPro" id="IPR035500">
    <property type="entry name" value="NHR-like_dom_sf"/>
</dbReference>
<dbReference type="InterPro" id="IPR000536">
    <property type="entry name" value="Nucl_hrmn_rcpt_lig-bd"/>
</dbReference>
<dbReference type="InterPro" id="IPR001628">
    <property type="entry name" value="Znf_hrmn_rcpt"/>
</dbReference>
<dbReference type="InterPro" id="IPR013088">
    <property type="entry name" value="Znf_NHR/GATA"/>
</dbReference>
<dbReference type="PANTHER" id="PTHR45680">
    <property type="entry name" value="NUCLEAR HORMONE RECEPTOR FAMILY"/>
    <property type="match status" value="1"/>
</dbReference>
<dbReference type="PANTHER" id="PTHR45680:SF12">
    <property type="entry name" value="NUCLEAR HORMONE RECEPTOR FAMILY-RELATED"/>
    <property type="match status" value="1"/>
</dbReference>
<dbReference type="Pfam" id="PF00104">
    <property type="entry name" value="Hormone_recep"/>
    <property type="match status" value="1"/>
</dbReference>
<dbReference type="Pfam" id="PF00105">
    <property type="entry name" value="zf-C4"/>
    <property type="match status" value="1"/>
</dbReference>
<dbReference type="PRINTS" id="PR00047">
    <property type="entry name" value="STROIDFINGER"/>
</dbReference>
<dbReference type="SMART" id="SM00430">
    <property type="entry name" value="HOLI"/>
    <property type="match status" value="1"/>
</dbReference>
<dbReference type="SMART" id="SM00399">
    <property type="entry name" value="ZnF_C4"/>
    <property type="match status" value="1"/>
</dbReference>
<dbReference type="SUPFAM" id="SSF57716">
    <property type="entry name" value="Glucocorticoid receptor-like (DNA-binding domain)"/>
    <property type="match status" value="1"/>
</dbReference>
<dbReference type="SUPFAM" id="SSF48508">
    <property type="entry name" value="Nuclear receptor ligand-binding domain"/>
    <property type="match status" value="1"/>
</dbReference>
<dbReference type="PROSITE" id="PS51843">
    <property type="entry name" value="NR_LBD"/>
    <property type="match status" value="1"/>
</dbReference>
<dbReference type="PROSITE" id="PS00031">
    <property type="entry name" value="NUCLEAR_REC_DBD_1"/>
    <property type="match status" value="1"/>
</dbReference>
<dbReference type="PROSITE" id="PS51030">
    <property type="entry name" value="NUCLEAR_REC_DBD_2"/>
    <property type="match status" value="1"/>
</dbReference>
<keyword id="KW-0238">DNA-binding</keyword>
<keyword id="KW-0479">Metal-binding</keyword>
<keyword id="KW-0539">Nucleus</keyword>
<keyword id="KW-0675">Receptor</keyword>
<keyword id="KW-1185">Reference proteome</keyword>
<keyword id="KW-0804">Transcription</keyword>
<keyword id="KW-0805">Transcription regulation</keyword>
<keyword id="KW-0862">Zinc</keyword>
<keyword id="KW-0863">Zinc-finger</keyword>
<feature type="chain" id="PRO_0000053789" description="Nuclear hormone receptor family member nhr-55">
    <location>
        <begin position="1"/>
        <end position="424"/>
    </location>
</feature>
<feature type="domain" description="NR LBD" evidence="2">
    <location>
        <begin position="169"/>
        <end position="424"/>
    </location>
</feature>
<feature type="DNA-binding region" description="Nuclear receptor" evidence="1">
    <location>
        <begin position="25"/>
        <end position="100"/>
    </location>
</feature>
<feature type="zinc finger region" description="NR C4-type" evidence="1">
    <location>
        <begin position="28"/>
        <end position="55"/>
    </location>
</feature>
<feature type="zinc finger region" description="NR C4-type" evidence="1">
    <location>
        <begin position="64"/>
        <end position="88"/>
    </location>
</feature>
<feature type="region of interest" description="Disordered" evidence="3">
    <location>
        <begin position="1"/>
        <end position="20"/>
    </location>
</feature>
<feature type="compositionally biased region" description="Low complexity" evidence="3">
    <location>
        <begin position="1"/>
        <end position="19"/>
    </location>
</feature>
<comment type="function">
    <text>Orphan nuclear receptor.</text>
</comment>
<comment type="subcellular location">
    <subcellularLocation>
        <location evidence="1">Nucleus</location>
    </subcellularLocation>
</comment>
<comment type="similarity">
    <text evidence="4">Belongs to the nuclear hormone receptor family.</text>
</comment>
<evidence type="ECO:0000255" key="1">
    <source>
        <dbReference type="PROSITE-ProRule" id="PRU00407"/>
    </source>
</evidence>
<evidence type="ECO:0000255" key="2">
    <source>
        <dbReference type="PROSITE-ProRule" id="PRU01189"/>
    </source>
</evidence>
<evidence type="ECO:0000256" key="3">
    <source>
        <dbReference type="SAM" id="MobiDB-lite"/>
    </source>
</evidence>
<evidence type="ECO:0000305" key="4"/>
<name>NHR55_CAEEL</name>